<feature type="chain" id="PRO_0000266566" description="Large ribosomal subunit protein uL14">
    <location>
        <begin position="1"/>
        <end position="122"/>
    </location>
</feature>
<dbReference type="EMBL" id="CP000356">
    <property type="protein sequence ID" value="ABF54513.1"/>
    <property type="molecule type" value="Genomic_DNA"/>
</dbReference>
<dbReference type="RefSeq" id="WP_011543078.1">
    <property type="nucleotide sequence ID" value="NC_008048.1"/>
</dbReference>
<dbReference type="SMR" id="Q1GPA9"/>
<dbReference type="STRING" id="317655.Sala_2808"/>
<dbReference type="KEGG" id="sal:Sala_2808"/>
<dbReference type="eggNOG" id="COG0093">
    <property type="taxonomic scope" value="Bacteria"/>
</dbReference>
<dbReference type="HOGENOM" id="CLU_095071_2_1_5"/>
<dbReference type="OrthoDB" id="9806379at2"/>
<dbReference type="Proteomes" id="UP000006578">
    <property type="component" value="Chromosome"/>
</dbReference>
<dbReference type="GO" id="GO:0022625">
    <property type="term" value="C:cytosolic large ribosomal subunit"/>
    <property type="evidence" value="ECO:0007669"/>
    <property type="project" value="TreeGrafter"/>
</dbReference>
<dbReference type="GO" id="GO:0070180">
    <property type="term" value="F:large ribosomal subunit rRNA binding"/>
    <property type="evidence" value="ECO:0007669"/>
    <property type="project" value="TreeGrafter"/>
</dbReference>
<dbReference type="GO" id="GO:0003735">
    <property type="term" value="F:structural constituent of ribosome"/>
    <property type="evidence" value="ECO:0007669"/>
    <property type="project" value="InterPro"/>
</dbReference>
<dbReference type="GO" id="GO:0006412">
    <property type="term" value="P:translation"/>
    <property type="evidence" value="ECO:0007669"/>
    <property type="project" value="UniProtKB-UniRule"/>
</dbReference>
<dbReference type="CDD" id="cd00337">
    <property type="entry name" value="Ribosomal_uL14"/>
    <property type="match status" value="1"/>
</dbReference>
<dbReference type="FunFam" id="2.40.150.20:FF:000001">
    <property type="entry name" value="50S ribosomal protein L14"/>
    <property type="match status" value="1"/>
</dbReference>
<dbReference type="Gene3D" id="2.40.150.20">
    <property type="entry name" value="Ribosomal protein L14"/>
    <property type="match status" value="1"/>
</dbReference>
<dbReference type="HAMAP" id="MF_01367">
    <property type="entry name" value="Ribosomal_uL14"/>
    <property type="match status" value="1"/>
</dbReference>
<dbReference type="InterPro" id="IPR000218">
    <property type="entry name" value="Ribosomal_uL14"/>
</dbReference>
<dbReference type="InterPro" id="IPR005745">
    <property type="entry name" value="Ribosomal_uL14_bac-type"/>
</dbReference>
<dbReference type="InterPro" id="IPR019972">
    <property type="entry name" value="Ribosomal_uL14_CS"/>
</dbReference>
<dbReference type="InterPro" id="IPR036853">
    <property type="entry name" value="Ribosomal_uL14_sf"/>
</dbReference>
<dbReference type="NCBIfam" id="TIGR01067">
    <property type="entry name" value="rplN_bact"/>
    <property type="match status" value="1"/>
</dbReference>
<dbReference type="PANTHER" id="PTHR11761">
    <property type="entry name" value="50S/60S RIBOSOMAL PROTEIN L14/L23"/>
    <property type="match status" value="1"/>
</dbReference>
<dbReference type="PANTHER" id="PTHR11761:SF3">
    <property type="entry name" value="LARGE RIBOSOMAL SUBUNIT PROTEIN UL14M"/>
    <property type="match status" value="1"/>
</dbReference>
<dbReference type="Pfam" id="PF00238">
    <property type="entry name" value="Ribosomal_L14"/>
    <property type="match status" value="1"/>
</dbReference>
<dbReference type="SMART" id="SM01374">
    <property type="entry name" value="Ribosomal_L14"/>
    <property type="match status" value="1"/>
</dbReference>
<dbReference type="SUPFAM" id="SSF50193">
    <property type="entry name" value="Ribosomal protein L14"/>
    <property type="match status" value="1"/>
</dbReference>
<dbReference type="PROSITE" id="PS00049">
    <property type="entry name" value="RIBOSOMAL_L14"/>
    <property type="match status" value="1"/>
</dbReference>
<gene>
    <name evidence="1" type="primary">rplN</name>
    <name type="ordered locus">Sala_2808</name>
</gene>
<accession>Q1GPA9</accession>
<keyword id="KW-1185">Reference proteome</keyword>
<keyword id="KW-0687">Ribonucleoprotein</keyword>
<keyword id="KW-0689">Ribosomal protein</keyword>
<keyword id="KW-0694">RNA-binding</keyword>
<keyword id="KW-0699">rRNA-binding</keyword>
<reference key="1">
    <citation type="journal article" date="2009" name="Proc. Natl. Acad. Sci. U.S.A.">
        <title>The genomic basis of trophic strategy in marine bacteria.</title>
        <authorList>
            <person name="Lauro F.M."/>
            <person name="McDougald D."/>
            <person name="Thomas T."/>
            <person name="Williams T.J."/>
            <person name="Egan S."/>
            <person name="Rice S."/>
            <person name="DeMaere M.Z."/>
            <person name="Ting L."/>
            <person name="Ertan H."/>
            <person name="Johnson J."/>
            <person name="Ferriera S."/>
            <person name="Lapidus A."/>
            <person name="Anderson I."/>
            <person name="Kyrpides N."/>
            <person name="Munk A.C."/>
            <person name="Detter C."/>
            <person name="Han C.S."/>
            <person name="Brown M.V."/>
            <person name="Robb F.T."/>
            <person name="Kjelleberg S."/>
            <person name="Cavicchioli R."/>
        </authorList>
    </citation>
    <scope>NUCLEOTIDE SEQUENCE [LARGE SCALE GENOMIC DNA]</scope>
    <source>
        <strain>DSM 13593 / LMG 18877 / RB2256</strain>
    </source>
</reference>
<evidence type="ECO:0000255" key="1">
    <source>
        <dbReference type="HAMAP-Rule" id="MF_01367"/>
    </source>
</evidence>
<evidence type="ECO:0000305" key="2"/>
<sequence length="122" mass="13276">MIQMQSQLEVADNSGAKRVQCIKVLGGSKRRTAGVGDVIVVSIKEAQPRGKVKKGDVHRAVIVRTAKDVRRADGSVIRFDSNAAVLVNKNEEPIGTRIFGPVVRELRGRGYMKIISLAPEVL</sequence>
<protein>
    <recommendedName>
        <fullName evidence="1">Large ribosomal subunit protein uL14</fullName>
    </recommendedName>
    <alternativeName>
        <fullName evidence="2">50S ribosomal protein L14</fullName>
    </alternativeName>
</protein>
<comment type="function">
    <text evidence="1">Binds to 23S rRNA. Forms part of two intersubunit bridges in the 70S ribosome.</text>
</comment>
<comment type="subunit">
    <text evidence="1">Part of the 50S ribosomal subunit. Forms a cluster with proteins L3 and L19. In the 70S ribosome, L14 and L19 interact and together make contacts with the 16S rRNA in bridges B5 and B8.</text>
</comment>
<comment type="similarity">
    <text evidence="1">Belongs to the universal ribosomal protein uL14 family.</text>
</comment>
<name>RL14_SPHAL</name>
<proteinExistence type="inferred from homology"/>
<organism>
    <name type="scientific">Sphingopyxis alaskensis (strain DSM 13593 / LMG 18877 / RB2256)</name>
    <name type="common">Sphingomonas alaskensis</name>
    <dbReference type="NCBI Taxonomy" id="317655"/>
    <lineage>
        <taxon>Bacteria</taxon>
        <taxon>Pseudomonadati</taxon>
        <taxon>Pseudomonadota</taxon>
        <taxon>Alphaproteobacteria</taxon>
        <taxon>Sphingomonadales</taxon>
        <taxon>Sphingomonadaceae</taxon>
        <taxon>Sphingopyxis</taxon>
    </lineage>
</organism>